<organism>
    <name type="scientific">Chelativorans sp. (strain BNC1)</name>
    <dbReference type="NCBI Taxonomy" id="266779"/>
    <lineage>
        <taxon>Bacteria</taxon>
        <taxon>Pseudomonadati</taxon>
        <taxon>Pseudomonadota</taxon>
        <taxon>Alphaproteobacteria</taxon>
        <taxon>Hyphomicrobiales</taxon>
        <taxon>Phyllobacteriaceae</taxon>
        <taxon>Chelativorans</taxon>
    </lineage>
</organism>
<accession>Q11C01</accession>
<feature type="chain" id="PRO_0000261073" description="Ribose import ATP-binding protein RbsA">
    <location>
        <begin position="1"/>
        <end position="506"/>
    </location>
</feature>
<feature type="domain" description="ABC transporter 1" evidence="1">
    <location>
        <begin position="5"/>
        <end position="237"/>
    </location>
</feature>
<feature type="domain" description="ABC transporter 2" evidence="1">
    <location>
        <begin position="249"/>
        <end position="492"/>
    </location>
</feature>
<feature type="binding site" evidence="1">
    <location>
        <begin position="37"/>
        <end position="44"/>
    </location>
    <ligand>
        <name>ATP</name>
        <dbReference type="ChEBI" id="CHEBI:30616"/>
    </ligand>
</feature>
<keyword id="KW-0067">ATP-binding</keyword>
<keyword id="KW-0997">Cell inner membrane</keyword>
<keyword id="KW-1003">Cell membrane</keyword>
<keyword id="KW-0472">Membrane</keyword>
<keyword id="KW-0547">Nucleotide-binding</keyword>
<keyword id="KW-0677">Repeat</keyword>
<keyword id="KW-0762">Sugar transport</keyword>
<keyword id="KW-1278">Translocase</keyword>
<keyword id="KW-0813">Transport</keyword>
<gene>
    <name evidence="1" type="primary">rbsA</name>
    <name type="ordered locus">Meso_3706</name>
</gene>
<dbReference type="EC" id="7.5.2.7" evidence="1"/>
<dbReference type="EMBL" id="CP000390">
    <property type="protein sequence ID" value="ABG65074.1"/>
    <property type="molecule type" value="Genomic_DNA"/>
</dbReference>
<dbReference type="SMR" id="Q11C01"/>
<dbReference type="STRING" id="266779.Meso_3706"/>
<dbReference type="KEGG" id="mes:Meso_3706"/>
<dbReference type="eggNOG" id="COG1129">
    <property type="taxonomic scope" value="Bacteria"/>
</dbReference>
<dbReference type="HOGENOM" id="CLU_000604_92_3_5"/>
<dbReference type="OrthoDB" id="9805029at2"/>
<dbReference type="GO" id="GO:0005886">
    <property type="term" value="C:plasma membrane"/>
    <property type="evidence" value="ECO:0007669"/>
    <property type="project" value="UniProtKB-SubCell"/>
</dbReference>
<dbReference type="GO" id="GO:0015611">
    <property type="term" value="F:ABC-type D-ribose transporter activity"/>
    <property type="evidence" value="ECO:0007669"/>
    <property type="project" value="UniProtKB-EC"/>
</dbReference>
<dbReference type="GO" id="GO:0005524">
    <property type="term" value="F:ATP binding"/>
    <property type="evidence" value="ECO:0007669"/>
    <property type="project" value="UniProtKB-KW"/>
</dbReference>
<dbReference type="GO" id="GO:0016887">
    <property type="term" value="F:ATP hydrolysis activity"/>
    <property type="evidence" value="ECO:0007669"/>
    <property type="project" value="InterPro"/>
</dbReference>
<dbReference type="CDD" id="cd03216">
    <property type="entry name" value="ABC_Carb_Monos_I"/>
    <property type="match status" value="1"/>
</dbReference>
<dbReference type="CDD" id="cd03215">
    <property type="entry name" value="ABC_Carb_Monos_II"/>
    <property type="match status" value="1"/>
</dbReference>
<dbReference type="FunFam" id="3.40.50.300:FF:000127">
    <property type="entry name" value="Ribose import ATP-binding protein RbsA"/>
    <property type="match status" value="1"/>
</dbReference>
<dbReference type="Gene3D" id="3.40.50.300">
    <property type="entry name" value="P-loop containing nucleotide triphosphate hydrolases"/>
    <property type="match status" value="2"/>
</dbReference>
<dbReference type="InterPro" id="IPR003593">
    <property type="entry name" value="AAA+_ATPase"/>
</dbReference>
<dbReference type="InterPro" id="IPR050107">
    <property type="entry name" value="ABC_carbohydrate_import_ATPase"/>
</dbReference>
<dbReference type="InterPro" id="IPR003439">
    <property type="entry name" value="ABC_transporter-like_ATP-bd"/>
</dbReference>
<dbReference type="InterPro" id="IPR017871">
    <property type="entry name" value="ABC_transporter-like_CS"/>
</dbReference>
<dbReference type="InterPro" id="IPR027417">
    <property type="entry name" value="P-loop_NTPase"/>
</dbReference>
<dbReference type="PANTHER" id="PTHR43790">
    <property type="entry name" value="CARBOHYDRATE TRANSPORT ATP-BINDING PROTEIN MG119-RELATED"/>
    <property type="match status" value="1"/>
</dbReference>
<dbReference type="PANTHER" id="PTHR43790:SF3">
    <property type="entry name" value="D-ALLOSE IMPORT ATP-BINDING PROTEIN ALSA-RELATED"/>
    <property type="match status" value="1"/>
</dbReference>
<dbReference type="Pfam" id="PF00005">
    <property type="entry name" value="ABC_tran"/>
    <property type="match status" value="2"/>
</dbReference>
<dbReference type="SMART" id="SM00382">
    <property type="entry name" value="AAA"/>
    <property type="match status" value="2"/>
</dbReference>
<dbReference type="SUPFAM" id="SSF52540">
    <property type="entry name" value="P-loop containing nucleoside triphosphate hydrolases"/>
    <property type="match status" value="2"/>
</dbReference>
<dbReference type="PROSITE" id="PS00211">
    <property type="entry name" value="ABC_TRANSPORTER_1"/>
    <property type="match status" value="1"/>
</dbReference>
<dbReference type="PROSITE" id="PS50893">
    <property type="entry name" value="ABC_TRANSPORTER_2"/>
    <property type="match status" value="2"/>
</dbReference>
<dbReference type="PROSITE" id="PS51254">
    <property type="entry name" value="RBSA"/>
    <property type="match status" value="1"/>
</dbReference>
<name>RBSA_CHESB</name>
<protein>
    <recommendedName>
        <fullName evidence="1">Ribose import ATP-binding protein RbsA</fullName>
        <ecNumber evidence="1">7.5.2.7</ecNumber>
    </recommendedName>
</protein>
<reference key="1">
    <citation type="submission" date="2006-06" db="EMBL/GenBank/DDBJ databases">
        <title>Complete sequence of chromosome of Mesorhizobium sp. BNC1.</title>
        <authorList>
            <consortium name="US DOE Joint Genome Institute"/>
            <person name="Copeland A."/>
            <person name="Lucas S."/>
            <person name="Lapidus A."/>
            <person name="Barry K."/>
            <person name="Detter J.C."/>
            <person name="Glavina del Rio T."/>
            <person name="Hammon N."/>
            <person name="Israni S."/>
            <person name="Dalin E."/>
            <person name="Tice H."/>
            <person name="Pitluck S."/>
            <person name="Chertkov O."/>
            <person name="Brettin T."/>
            <person name="Bruce D."/>
            <person name="Han C."/>
            <person name="Tapia R."/>
            <person name="Gilna P."/>
            <person name="Schmutz J."/>
            <person name="Larimer F."/>
            <person name="Land M."/>
            <person name="Hauser L."/>
            <person name="Kyrpides N."/>
            <person name="Mikhailova N."/>
            <person name="Richardson P."/>
        </authorList>
    </citation>
    <scope>NUCLEOTIDE SEQUENCE [LARGE SCALE GENOMIC DNA]</scope>
    <source>
        <strain>BNC1</strain>
    </source>
</reference>
<proteinExistence type="inferred from homology"/>
<comment type="function">
    <text evidence="1">Part of the ABC transporter complex RbsABC involved in ribose import. Responsible for energy coupling to the transport system.</text>
</comment>
<comment type="catalytic activity">
    <reaction evidence="1">
        <text>D-ribose(out) + ATP + H2O = D-ribose(in) + ADP + phosphate + H(+)</text>
        <dbReference type="Rhea" id="RHEA:29903"/>
        <dbReference type="ChEBI" id="CHEBI:15377"/>
        <dbReference type="ChEBI" id="CHEBI:15378"/>
        <dbReference type="ChEBI" id="CHEBI:30616"/>
        <dbReference type="ChEBI" id="CHEBI:43474"/>
        <dbReference type="ChEBI" id="CHEBI:47013"/>
        <dbReference type="ChEBI" id="CHEBI:456216"/>
        <dbReference type="EC" id="7.5.2.7"/>
    </reaction>
</comment>
<comment type="subunit">
    <text evidence="1">The complex is composed of an ATP-binding protein (RbsA), two transmembrane proteins (RbsC) and a solute-binding protein (RbsB).</text>
</comment>
<comment type="subcellular location">
    <subcellularLocation>
        <location evidence="1">Cell inner membrane</location>
        <topology evidence="1">Peripheral membrane protein</topology>
    </subcellularLocation>
</comment>
<comment type="similarity">
    <text evidence="1">Belongs to the ABC transporter superfamily. Ribose importer (TC 3.A.1.2.1) family.</text>
</comment>
<sequence>MTDFVQLIGIEKHFGGIAALKSVDFTVKSGEVHALIGENGAGKSTLMGVLSGNVIPTAGTISVEGCVRRFSTPGDAIAAGIAMIHQELVLAPDLTVAENIFMNRMPRLIDWAKLRRDAAQILDRLGFEIDPGATIGDLPLAQRQIVEIAKALSLNARLIIFDEPTAVLGPSDARRLLNLIRSLRSEGVAIVYISHRLDEVADIADRVTVLNDGSLIATRAAKDVTIEEMVRLMVGRPISALFGEKRTSPFGAEIFRVESLTAGPLVQDLSFGVRAGEIVGLGGLIGSGRTETARAIFGADKRESGRIFIDGSQVKIRDPRDAVKAGIGLVPEDRRGQGVVIDASIRINTTMTSLRRFSPAGIIKRTFERRFVGEKIAALKVKSAGIDAPVQSLSGGNQQKVVIGKWVDVASKVIILDEPTRGVDVGAKSEIYAIIRRLADEGRAVLLISSDHQELFGLCDRVLVMGRGRIRSELLPGEFDEERLLSASLAIEPIQTTVRTDQNPAG</sequence>
<evidence type="ECO:0000255" key="1">
    <source>
        <dbReference type="HAMAP-Rule" id="MF_01716"/>
    </source>
</evidence>